<accession>B4RLH9</accession>
<protein>
    <recommendedName>
        <fullName evidence="1">Acetyl-coenzyme A carboxylase carboxyl transferase subunit alpha</fullName>
        <shortName evidence="1">ACCase subunit alpha</shortName>
        <shortName evidence="1">Acetyl-CoA carboxylase carboxyltransferase subunit alpha</shortName>
        <ecNumber evidence="1">2.1.3.15</ecNumber>
    </recommendedName>
</protein>
<evidence type="ECO:0000255" key="1">
    <source>
        <dbReference type="HAMAP-Rule" id="MF_00823"/>
    </source>
</evidence>
<evidence type="ECO:0000255" key="2">
    <source>
        <dbReference type="PROSITE-ProRule" id="PRU01137"/>
    </source>
</evidence>
<comment type="function">
    <text evidence="1">Component of the acetyl coenzyme A carboxylase (ACC) complex. First, biotin carboxylase catalyzes the carboxylation of biotin on its carrier protein (BCCP) and then the CO(2) group is transferred by the carboxyltransferase to acetyl-CoA to form malonyl-CoA.</text>
</comment>
<comment type="catalytic activity">
    <reaction evidence="1">
        <text>N(6)-carboxybiotinyl-L-lysyl-[protein] + acetyl-CoA = N(6)-biotinyl-L-lysyl-[protein] + malonyl-CoA</text>
        <dbReference type="Rhea" id="RHEA:54728"/>
        <dbReference type="Rhea" id="RHEA-COMP:10505"/>
        <dbReference type="Rhea" id="RHEA-COMP:10506"/>
        <dbReference type="ChEBI" id="CHEBI:57288"/>
        <dbReference type="ChEBI" id="CHEBI:57384"/>
        <dbReference type="ChEBI" id="CHEBI:83144"/>
        <dbReference type="ChEBI" id="CHEBI:83145"/>
        <dbReference type="EC" id="2.1.3.15"/>
    </reaction>
</comment>
<comment type="pathway">
    <text evidence="1">Lipid metabolism; malonyl-CoA biosynthesis; malonyl-CoA from acetyl-CoA: step 1/1.</text>
</comment>
<comment type="subunit">
    <text evidence="1">Acetyl-CoA carboxylase is a heterohexamer composed of biotin carboxyl carrier protein (AccB), biotin carboxylase (AccC) and two subunits each of ACCase subunit alpha (AccA) and ACCase subunit beta (AccD).</text>
</comment>
<comment type="subcellular location">
    <subcellularLocation>
        <location evidence="1">Cytoplasm</location>
    </subcellularLocation>
</comment>
<comment type="similarity">
    <text evidence="1">Belongs to the AccA family.</text>
</comment>
<name>ACCA_NEIG2</name>
<dbReference type="EC" id="2.1.3.15" evidence="1"/>
<dbReference type="EMBL" id="CP001050">
    <property type="protein sequence ID" value="ACF29666.1"/>
    <property type="molecule type" value="Genomic_DNA"/>
</dbReference>
<dbReference type="RefSeq" id="WP_003688588.1">
    <property type="nucleotide sequence ID" value="NC_011035.1"/>
</dbReference>
<dbReference type="SMR" id="B4RLH9"/>
<dbReference type="KEGG" id="ngk:NGK_0989"/>
<dbReference type="HOGENOM" id="CLU_015486_0_2_4"/>
<dbReference type="UniPathway" id="UPA00655">
    <property type="reaction ID" value="UER00711"/>
</dbReference>
<dbReference type="Proteomes" id="UP000002564">
    <property type="component" value="Chromosome"/>
</dbReference>
<dbReference type="GO" id="GO:0009317">
    <property type="term" value="C:acetyl-CoA carboxylase complex"/>
    <property type="evidence" value="ECO:0007669"/>
    <property type="project" value="InterPro"/>
</dbReference>
<dbReference type="GO" id="GO:0003989">
    <property type="term" value="F:acetyl-CoA carboxylase activity"/>
    <property type="evidence" value="ECO:0007669"/>
    <property type="project" value="InterPro"/>
</dbReference>
<dbReference type="GO" id="GO:0005524">
    <property type="term" value="F:ATP binding"/>
    <property type="evidence" value="ECO:0007669"/>
    <property type="project" value="UniProtKB-KW"/>
</dbReference>
<dbReference type="GO" id="GO:0016743">
    <property type="term" value="F:carboxyl- or carbamoyltransferase activity"/>
    <property type="evidence" value="ECO:0007669"/>
    <property type="project" value="UniProtKB-UniRule"/>
</dbReference>
<dbReference type="GO" id="GO:0006633">
    <property type="term" value="P:fatty acid biosynthetic process"/>
    <property type="evidence" value="ECO:0007669"/>
    <property type="project" value="UniProtKB-KW"/>
</dbReference>
<dbReference type="GO" id="GO:2001295">
    <property type="term" value="P:malonyl-CoA biosynthetic process"/>
    <property type="evidence" value="ECO:0007669"/>
    <property type="project" value="UniProtKB-UniRule"/>
</dbReference>
<dbReference type="Gene3D" id="3.90.226.10">
    <property type="entry name" value="2-enoyl-CoA Hydratase, Chain A, domain 1"/>
    <property type="match status" value="1"/>
</dbReference>
<dbReference type="HAMAP" id="MF_00823">
    <property type="entry name" value="AcetylCoA_CT_alpha"/>
    <property type="match status" value="1"/>
</dbReference>
<dbReference type="InterPro" id="IPR001095">
    <property type="entry name" value="Acetyl_CoA_COase_a_su"/>
</dbReference>
<dbReference type="InterPro" id="IPR029045">
    <property type="entry name" value="ClpP/crotonase-like_dom_sf"/>
</dbReference>
<dbReference type="InterPro" id="IPR011763">
    <property type="entry name" value="COA_CT_C"/>
</dbReference>
<dbReference type="NCBIfam" id="TIGR00513">
    <property type="entry name" value="accA"/>
    <property type="match status" value="1"/>
</dbReference>
<dbReference type="NCBIfam" id="NF041504">
    <property type="entry name" value="AccA_sub"/>
    <property type="match status" value="1"/>
</dbReference>
<dbReference type="NCBIfam" id="NF004344">
    <property type="entry name" value="PRK05724.1"/>
    <property type="match status" value="1"/>
</dbReference>
<dbReference type="PANTHER" id="PTHR42853">
    <property type="entry name" value="ACETYL-COENZYME A CARBOXYLASE CARBOXYL TRANSFERASE SUBUNIT ALPHA"/>
    <property type="match status" value="1"/>
</dbReference>
<dbReference type="PANTHER" id="PTHR42853:SF3">
    <property type="entry name" value="ACETYL-COENZYME A CARBOXYLASE CARBOXYL TRANSFERASE SUBUNIT ALPHA, CHLOROPLASTIC"/>
    <property type="match status" value="1"/>
</dbReference>
<dbReference type="Pfam" id="PF03255">
    <property type="entry name" value="ACCA"/>
    <property type="match status" value="1"/>
</dbReference>
<dbReference type="PRINTS" id="PR01069">
    <property type="entry name" value="ACCCTRFRASEA"/>
</dbReference>
<dbReference type="SUPFAM" id="SSF52096">
    <property type="entry name" value="ClpP/crotonase"/>
    <property type="match status" value="1"/>
</dbReference>
<dbReference type="PROSITE" id="PS50989">
    <property type="entry name" value="COA_CT_CTER"/>
    <property type="match status" value="1"/>
</dbReference>
<keyword id="KW-0067">ATP-binding</keyword>
<keyword id="KW-0963">Cytoplasm</keyword>
<keyword id="KW-0275">Fatty acid biosynthesis</keyword>
<keyword id="KW-0276">Fatty acid metabolism</keyword>
<keyword id="KW-0444">Lipid biosynthesis</keyword>
<keyword id="KW-0443">Lipid metabolism</keyword>
<keyword id="KW-0547">Nucleotide-binding</keyword>
<keyword id="KW-0808">Transferase</keyword>
<proteinExistence type="inferred from homology"/>
<feature type="chain" id="PRO_1000134500" description="Acetyl-coenzyme A carboxylase carboxyl transferase subunit alpha">
    <location>
        <begin position="1"/>
        <end position="317"/>
    </location>
</feature>
<feature type="domain" description="CoA carboxyltransferase C-terminal" evidence="2">
    <location>
        <begin position="39"/>
        <end position="293"/>
    </location>
</feature>
<gene>
    <name evidence="1" type="primary">accA</name>
    <name type="ordered locus">NGK_0989</name>
</gene>
<organism>
    <name type="scientific">Neisseria gonorrhoeae (strain NCCP11945)</name>
    <dbReference type="NCBI Taxonomy" id="521006"/>
    <lineage>
        <taxon>Bacteria</taxon>
        <taxon>Pseudomonadati</taxon>
        <taxon>Pseudomonadota</taxon>
        <taxon>Betaproteobacteria</taxon>
        <taxon>Neisseriales</taxon>
        <taxon>Neisseriaceae</taxon>
        <taxon>Neisseria</taxon>
    </lineage>
</organism>
<sequence length="317" mass="35163">MKPVFLDFEQPIAELTNKIDELRFVQDESAVDISDEIHRLQKKSNDLTKSIFSKLTPAQISQVSRHPQRPYTLDYIDALFTDFEELHGDRHFADDHAIVGGLARFNGQSVVVVGHQKGRDTKEKIRRNFGMPRPEGYRKALRLMKTAEKFGLPVMTFIDTPGAYPGIGAEERGQSEAIGKNLYELTRLRVPVLCTVIGEGGSGGALAVAVGDYVNMLQYSTYSVISPEGCASILWKTAEKAADAAQALGITADRLQKLDLVDTVIKEPLGGAHRDFGQTMKNVKAVLEKQLHEAQSIPLADLLSRRFDRIMAYGKFS</sequence>
<reference key="1">
    <citation type="journal article" date="2008" name="J. Bacteriol.">
        <title>Complete genome sequence of Neisseria gonorrhoeae NCCP11945.</title>
        <authorList>
            <person name="Chung G.T."/>
            <person name="Yoo J.S."/>
            <person name="Oh H.B."/>
            <person name="Lee Y.S."/>
            <person name="Cha S.H."/>
            <person name="Kim S.J."/>
            <person name="Yoo C.K."/>
        </authorList>
    </citation>
    <scope>NUCLEOTIDE SEQUENCE [LARGE SCALE GENOMIC DNA]</scope>
    <source>
        <strain>NCCP11945</strain>
    </source>
</reference>